<keyword id="KW-0903">Direct protein sequencing</keyword>
<keyword id="KW-1015">Disulfide bond</keyword>
<keyword id="KW-0325">Glycoprotein</keyword>
<keyword id="KW-0646">Protease inhibitor</keyword>
<keyword id="KW-0677">Repeat</keyword>
<keyword id="KW-0964">Secreted</keyword>
<keyword id="KW-0722">Serine protease inhibitor</keyword>
<dbReference type="PIR" id="F31438">
    <property type="entry name" value="F31438"/>
</dbReference>
<dbReference type="SMR" id="P68393"/>
<dbReference type="GO" id="GO:0005576">
    <property type="term" value="C:extracellular region"/>
    <property type="evidence" value="ECO:0007669"/>
    <property type="project" value="UniProtKB-SubCell"/>
</dbReference>
<dbReference type="GO" id="GO:0004867">
    <property type="term" value="F:serine-type endopeptidase inhibitor activity"/>
    <property type="evidence" value="ECO:0007669"/>
    <property type="project" value="UniProtKB-KW"/>
</dbReference>
<dbReference type="CDD" id="cd00104">
    <property type="entry name" value="KAZAL_FS"/>
    <property type="match status" value="1"/>
</dbReference>
<dbReference type="FunFam" id="3.30.60.30:FF:000037">
    <property type="entry name" value="Ovomucoid"/>
    <property type="match status" value="1"/>
</dbReference>
<dbReference type="Gene3D" id="3.30.60.30">
    <property type="match status" value="1"/>
</dbReference>
<dbReference type="InterPro" id="IPR051597">
    <property type="entry name" value="Bifunctional_prot_inhibitor"/>
</dbReference>
<dbReference type="InterPro" id="IPR002350">
    <property type="entry name" value="Kazal_dom"/>
</dbReference>
<dbReference type="InterPro" id="IPR036058">
    <property type="entry name" value="Kazal_dom_sf"/>
</dbReference>
<dbReference type="InterPro" id="IPR001239">
    <property type="entry name" value="Prot_inh_Kazal-m"/>
</dbReference>
<dbReference type="PANTHER" id="PTHR47729:SF1">
    <property type="entry name" value="OVOMUCOID-LIKE-RELATED"/>
    <property type="match status" value="1"/>
</dbReference>
<dbReference type="PANTHER" id="PTHR47729">
    <property type="entry name" value="SERINE PEPTIDASE INHIBITOR, KAZAL TYPE 2, TANDEM DUPLICATE 1-RELATED"/>
    <property type="match status" value="1"/>
</dbReference>
<dbReference type="Pfam" id="PF00050">
    <property type="entry name" value="Kazal_1"/>
    <property type="match status" value="1"/>
</dbReference>
<dbReference type="PRINTS" id="PR00290">
    <property type="entry name" value="KAZALINHBTR"/>
</dbReference>
<dbReference type="SMART" id="SM00280">
    <property type="entry name" value="KAZAL"/>
    <property type="match status" value="1"/>
</dbReference>
<dbReference type="SUPFAM" id="SSF100895">
    <property type="entry name" value="Kazal-type serine protease inhibitors"/>
    <property type="match status" value="1"/>
</dbReference>
<dbReference type="PROSITE" id="PS00282">
    <property type="entry name" value="KAZAL_1"/>
    <property type="match status" value="1"/>
</dbReference>
<dbReference type="PROSITE" id="PS51465">
    <property type="entry name" value="KAZAL_2"/>
    <property type="match status" value="1"/>
</dbReference>
<name>IOVO_BRACA</name>
<reference key="1">
    <citation type="journal article" date="1987" name="Biochemistry">
        <title>Ovomucoid third domains from 100 avian species: isolation, sequences, and hypervariability of enzyme-inhibitor contact residues.</title>
        <authorList>
            <person name="Laskowski M. Jr."/>
            <person name="Kato I."/>
            <person name="Ardelt W."/>
            <person name="Cook J."/>
            <person name="Denton A."/>
            <person name="Empie M.W."/>
            <person name="Kohr W.J."/>
            <person name="Park S.J."/>
            <person name="Parks K."/>
            <person name="Schatzley B.L."/>
            <person name="Schoenberger O.L."/>
            <person name="Tashiro M."/>
            <person name="Vichot G."/>
            <person name="Whatley H.E."/>
            <person name="Wieczorek A."/>
            <person name="Wieczorek M."/>
        </authorList>
    </citation>
    <scope>PROTEIN SEQUENCE</scope>
</reference>
<organism>
    <name type="scientific">Branta canadensis</name>
    <name type="common">Canada goose</name>
    <name type="synonym">Anas canadensis</name>
    <dbReference type="NCBI Taxonomy" id="8853"/>
    <lineage>
        <taxon>Eukaryota</taxon>
        <taxon>Metazoa</taxon>
        <taxon>Chordata</taxon>
        <taxon>Craniata</taxon>
        <taxon>Vertebrata</taxon>
        <taxon>Euteleostomi</taxon>
        <taxon>Archelosauria</taxon>
        <taxon>Archosauria</taxon>
        <taxon>Dinosauria</taxon>
        <taxon>Saurischia</taxon>
        <taxon>Theropoda</taxon>
        <taxon>Coelurosauria</taxon>
        <taxon>Aves</taxon>
        <taxon>Neognathae</taxon>
        <taxon>Galloanserae</taxon>
        <taxon>Anseriformes</taxon>
        <taxon>Anatidae</taxon>
        <taxon>Anserinae</taxon>
        <taxon>Branta</taxon>
    </lineage>
</organism>
<protein>
    <recommendedName>
        <fullName>Ovomucoid</fullName>
    </recommendedName>
</protein>
<accession>P68393</accession>
<accession>P05574</accession>
<comment type="subcellular location">
    <subcellularLocation>
        <location>Secreted</location>
    </subcellularLocation>
</comment>
<comment type="domain">
    <text>Avian ovomucoid consists of three homologous, tandem Kazal family inhibitory domains.</text>
</comment>
<feature type="chain" id="PRO_0000073070" description="Ovomucoid">
    <location>
        <begin position="1" status="less than"/>
        <end position="54" status="greater than"/>
    </location>
</feature>
<feature type="domain" description="Kazal-like" evidence="1">
    <location>
        <begin position="4"/>
        <end position="54"/>
    </location>
</feature>
<feature type="site" description="Reactive bond 3">
    <location>
        <begin position="16"/>
        <end position="17"/>
    </location>
</feature>
<feature type="glycosylation site" description="N-linked (GlcNAc...) asparagine">
    <location>
        <position position="43"/>
    </location>
</feature>
<feature type="disulfide bond">
    <location>
        <begin position="6"/>
        <end position="36"/>
    </location>
</feature>
<feature type="disulfide bond">
    <location>
        <begin position="14"/>
        <end position="33"/>
    </location>
</feature>
<feature type="disulfide bond">
    <location>
        <begin position="22"/>
        <end position="54"/>
    </location>
</feature>
<feature type="non-terminal residue">
    <location>
        <position position="1"/>
    </location>
</feature>
<feature type="non-terminal residue">
    <location>
        <position position="54"/>
    </location>
</feature>
<evidence type="ECO:0000255" key="1">
    <source>
        <dbReference type="PROSITE-ProRule" id="PRU00798"/>
    </source>
</evidence>
<proteinExistence type="evidence at protein level"/>
<sequence>VATVDCSDYPKPACTVEYMPLCGSDNKTYGNKCNFCNAVVDSNGTLTLSHFGKC</sequence>